<accession>Q6G9G3</accession>
<organism>
    <name type="scientific">Staphylococcus aureus (strain MSSA476)</name>
    <dbReference type="NCBI Taxonomy" id="282459"/>
    <lineage>
        <taxon>Bacteria</taxon>
        <taxon>Bacillati</taxon>
        <taxon>Bacillota</taxon>
        <taxon>Bacilli</taxon>
        <taxon>Bacillales</taxon>
        <taxon>Staphylococcaceae</taxon>
        <taxon>Staphylococcus</taxon>
    </lineage>
</organism>
<gene>
    <name type="ordered locus">SAS1339</name>
</gene>
<dbReference type="EC" id="3.-.-.-"/>
<dbReference type="EMBL" id="BX571857">
    <property type="protein sequence ID" value="CAG43115.1"/>
    <property type="molecule type" value="Genomic_DNA"/>
</dbReference>
<dbReference type="RefSeq" id="WP_001003793.1">
    <property type="nucleotide sequence ID" value="NC_002953.3"/>
</dbReference>
<dbReference type="SMR" id="Q6G9G3"/>
<dbReference type="KEGG" id="sas:SAS1339"/>
<dbReference type="HOGENOM" id="CLU_023257_1_0_9"/>
<dbReference type="GO" id="GO:0016787">
    <property type="term" value="F:hydrolase activity"/>
    <property type="evidence" value="ECO:0007669"/>
    <property type="project" value="UniProtKB-KW"/>
</dbReference>
<dbReference type="FunFam" id="3.30.70.360:FF:000022">
    <property type="entry name" value="Hippurate hydrolase"/>
    <property type="match status" value="1"/>
</dbReference>
<dbReference type="Gene3D" id="3.30.70.360">
    <property type="match status" value="1"/>
</dbReference>
<dbReference type="Gene3D" id="3.40.630.10">
    <property type="entry name" value="Zn peptidases"/>
    <property type="match status" value="1"/>
</dbReference>
<dbReference type="InterPro" id="IPR017439">
    <property type="entry name" value="Amidohydrolase"/>
</dbReference>
<dbReference type="InterPro" id="IPR036264">
    <property type="entry name" value="Bact_exopeptidase_dim_dom"/>
</dbReference>
<dbReference type="InterPro" id="IPR002933">
    <property type="entry name" value="Peptidase_M20"/>
</dbReference>
<dbReference type="InterPro" id="IPR011650">
    <property type="entry name" value="Peptidase_M20_dimer"/>
</dbReference>
<dbReference type="NCBIfam" id="TIGR01891">
    <property type="entry name" value="amidohydrolases"/>
    <property type="match status" value="1"/>
</dbReference>
<dbReference type="PANTHER" id="PTHR11014:SF63">
    <property type="entry name" value="METALLOPEPTIDASE, PUTATIVE (AFU_ORTHOLOGUE AFUA_6G09600)-RELATED"/>
    <property type="match status" value="1"/>
</dbReference>
<dbReference type="PANTHER" id="PTHR11014">
    <property type="entry name" value="PEPTIDASE M20 FAMILY MEMBER"/>
    <property type="match status" value="1"/>
</dbReference>
<dbReference type="Pfam" id="PF07687">
    <property type="entry name" value="M20_dimer"/>
    <property type="match status" value="1"/>
</dbReference>
<dbReference type="Pfam" id="PF01546">
    <property type="entry name" value="Peptidase_M20"/>
    <property type="match status" value="1"/>
</dbReference>
<dbReference type="PIRSF" id="PIRSF005962">
    <property type="entry name" value="Pept_M20D_amidohydro"/>
    <property type="match status" value="1"/>
</dbReference>
<dbReference type="SUPFAM" id="SSF55031">
    <property type="entry name" value="Bacterial exopeptidase dimerisation domain"/>
    <property type="match status" value="1"/>
</dbReference>
<dbReference type="SUPFAM" id="SSF53187">
    <property type="entry name" value="Zn-dependent exopeptidases"/>
    <property type="match status" value="1"/>
</dbReference>
<protein>
    <recommendedName>
        <fullName>Uncharacterized hydrolase SAS1339</fullName>
        <ecNumber>3.-.-.-</ecNumber>
    </recommendedName>
</protein>
<feature type="chain" id="PRO_0000298621" description="Uncharacterized hydrolase SAS1339">
    <location>
        <begin position="1"/>
        <end position="383"/>
    </location>
</feature>
<keyword id="KW-0378">Hydrolase</keyword>
<name>Y1339_STAAS</name>
<evidence type="ECO:0000305" key="1"/>
<comment type="similarity">
    <text evidence="1">Belongs to the peptidase M20 family.</text>
</comment>
<proteinExistence type="inferred from homology"/>
<reference key="1">
    <citation type="journal article" date="2004" name="Proc. Natl. Acad. Sci. U.S.A.">
        <title>Complete genomes of two clinical Staphylococcus aureus strains: evidence for the rapid evolution of virulence and drug resistance.</title>
        <authorList>
            <person name="Holden M.T.G."/>
            <person name="Feil E.J."/>
            <person name="Lindsay J.A."/>
            <person name="Peacock S.J."/>
            <person name="Day N.P.J."/>
            <person name="Enright M.C."/>
            <person name="Foster T.J."/>
            <person name="Moore C.E."/>
            <person name="Hurst L."/>
            <person name="Atkin R."/>
            <person name="Barron A."/>
            <person name="Bason N."/>
            <person name="Bentley S.D."/>
            <person name="Chillingworth C."/>
            <person name="Chillingworth T."/>
            <person name="Churcher C."/>
            <person name="Clark L."/>
            <person name="Corton C."/>
            <person name="Cronin A."/>
            <person name="Doggett J."/>
            <person name="Dowd L."/>
            <person name="Feltwell T."/>
            <person name="Hance Z."/>
            <person name="Harris B."/>
            <person name="Hauser H."/>
            <person name="Holroyd S."/>
            <person name="Jagels K."/>
            <person name="James K.D."/>
            <person name="Lennard N."/>
            <person name="Line A."/>
            <person name="Mayes R."/>
            <person name="Moule S."/>
            <person name="Mungall K."/>
            <person name="Ormond D."/>
            <person name="Quail M.A."/>
            <person name="Rabbinowitsch E."/>
            <person name="Rutherford K.M."/>
            <person name="Sanders M."/>
            <person name="Sharp S."/>
            <person name="Simmonds M."/>
            <person name="Stevens K."/>
            <person name="Whitehead S."/>
            <person name="Barrell B.G."/>
            <person name="Spratt B.G."/>
            <person name="Parkhill J."/>
        </authorList>
    </citation>
    <scope>NUCLEOTIDE SEQUENCE [LARGE SCALE GENOMIC DNA]</scope>
    <source>
        <strain>MSSA476</strain>
    </source>
</reference>
<sequence>MNELEFVTKHRRHLHQHPELSLHEFETTAYIKAFLDSLNIKYDCPLETGVIAYLEGNGSHTIAYRADIDALPILEENDVPYRSQSDHVMHACGHDGHTTALMLFVQRCKDMQDAGQLPQNVVFIFQPAEETGGGANRLIKAGAFDKYPIEAVFGIHVNPFADEGIAVIRDEEITASATEYRFFLTGLSSHVADKEQGHSCGEALQHVLTQISQIQQFHLNGLKRNIVHIGHFKAGEAINTVPSNGYLEGTIRTYDIDDLTIVKNQMHKIAESVKLLFNVDCEVKFAEGYPPTINSPKLRTQIEDALIKADLNVYDKPTPFLFGEDFSFYGQQLAPAYFVFIGTRNEDKGFVTGLHTSHLNFDEKVLINVVNFYENLLNNYKEV</sequence>